<feature type="chain" id="PRO_1000145625" description="Agmatinase">
    <location>
        <begin position="1"/>
        <end position="306"/>
    </location>
</feature>
<feature type="binding site" evidence="1">
    <location>
        <position position="126"/>
    </location>
    <ligand>
        <name>Mn(2+)</name>
        <dbReference type="ChEBI" id="CHEBI:29035"/>
    </ligand>
</feature>
<feature type="binding site" evidence="1">
    <location>
        <position position="149"/>
    </location>
    <ligand>
        <name>Mn(2+)</name>
        <dbReference type="ChEBI" id="CHEBI:29035"/>
    </ligand>
</feature>
<feature type="binding site" evidence="1">
    <location>
        <position position="151"/>
    </location>
    <ligand>
        <name>Mn(2+)</name>
        <dbReference type="ChEBI" id="CHEBI:29035"/>
    </ligand>
</feature>
<feature type="binding site" evidence="1">
    <location>
        <position position="153"/>
    </location>
    <ligand>
        <name>Mn(2+)</name>
        <dbReference type="ChEBI" id="CHEBI:29035"/>
    </ligand>
</feature>
<feature type="binding site" evidence="1">
    <location>
        <position position="230"/>
    </location>
    <ligand>
        <name>Mn(2+)</name>
        <dbReference type="ChEBI" id="CHEBI:29035"/>
    </ligand>
</feature>
<feature type="binding site" evidence="1">
    <location>
        <position position="232"/>
    </location>
    <ligand>
        <name>Mn(2+)</name>
        <dbReference type="ChEBI" id="CHEBI:29035"/>
    </ligand>
</feature>
<reference key="1">
    <citation type="journal article" date="2009" name="BMC Genomics">
        <title>Pseudogene accumulation in the evolutionary histories of Salmonella enterica serovars Paratyphi A and Typhi.</title>
        <authorList>
            <person name="Holt K.E."/>
            <person name="Thomson N.R."/>
            <person name="Wain J."/>
            <person name="Langridge G.C."/>
            <person name="Hasan R."/>
            <person name="Bhutta Z.A."/>
            <person name="Quail M.A."/>
            <person name="Norbertczak H."/>
            <person name="Walker D."/>
            <person name="Simmonds M."/>
            <person name="White B."/>
            <person name="Bason N."/>
            <person name="Mungall K."/>
            <person name="Dougan G."/>
            <person name="Parkhill J."/>
        </authorList>
    </citation>
    <scope>NUCLEOTIDE SEQUENCE [LARGE SCALE GENOMIC DNA]</scope>
    <source>
        <strain>AKU_12601</strain>
    </source>
</reference>
<gene>
    <name evidence="1" type="primary">speB</name>
    <name type="ordered locus">SSPA2748</name>
</gene>
<evidence type="ECO:0000255" key="1">
    <source>
        <dbReference type="HAMAP-Rule" id="MF_01418"/>
    </source>
</evidence>
<name>SPEB_SALPK</name>
<dbReference type="EC" id="3.5.3.11" evidence="1"/>
<dbReference type="EMBL" id="FM200053">
    <property type="protein sequence ID" value="CAR60989.1"/>
    <property type="molecule type" value="Genomic_DNA"/>
</dbReference>
<dbReference type="RefSeq" id="WP_000105550.1">
    <property type="nucleotide sequence ID" value="NC_011147.1"/>
</dbReference>
<dbReference type="SMR" id="B5BFP3"/>
<dbReference type="KEGG" id="sek:SSPA2748"/>
<dbReference type="HOGENOM" id="CLU_039478_0_0_6"/>
<dbReference type="UniPathway" id="UPA00534">
    <property type="reaction ID" value="UER00287"/>
</dbReference>
<dbReference type="Proteomes" id="UP000001869">
    <property type="component" value="Chromosome"/>
</dbReference>
<dbReference type="GO" id="GO:0008783">
    <property type="term" value="F:agmatinase activity"/>
    <property type="evidence" value="ECO:0007669"/>
    <property type="project" value="UniProtKB-UniRule"/>
</dbReference>
<dbReference type="GO" id="GO:0030145">
    <property type="term" value="F:manganese ion binding"/>
    <property type="evidence" value="ECO:0007669"/>
    <property type="project" value="InterPro"/>
</dbReference>
<dbReference type="GO" id="GO:0033389">
    <property type="term" value="P:putrescine biosynthetic process from arginine, via agmatine"/>
    <property type="evidence" value="ECO:0007669"/>
    <property type="project" value="TreeGrafter"/>
</dbReference>
<dbReference type="GO" id="GO:0008295">
    <property type="term" value="P:spermidine biosynthetic process"/>
    <property type="evidence" value="ECO:0007669"/>
    <property type="project" value="UniProtKB-UniRule"/>
</dbReference>
<dbReference type="CDD" id="cd11592">
    <property type="entry name" value="Agmatinase_PAH"/>
    <property type="match status" value="1"/>
</dbReference>
<dbReference type="FunFam" id="3.40.800.10:FF:000001">
    <property type="entry name" value="Agmatinase"/>
    <property type="match status" value="1"/>
</dbReference>
<dbReference type="Gene3D" id="3.40.800.10">
    <property type="entry name" value="Ureohydrolase domain"/>
    <property type="match status" value="1"/>
</dbReference>
<dbReference type="HAMAP" id="MF_01418">
    <property type="entry name" value="SpeB"/>
    <property type="match status" value="1"/>
</dbReference>
<dbReference type="InterPro" id="IPR023694">
    <property type="entry name" value="Agmatinase"/>
</dbReference>
<dbReference type="InterPro" id="IPR005925">
    <property type="entry name" value="Agmatinase-rel"/>
</dbReference>
<dbReference type="InterPro" id="IPR006035">
    <property type="entry name" value="Ureohydrolase"/>
</dbReference>
<dbReference type="InterPro" id="IPR023696">
    <property type="entry name" value="Ureohydrolase_dom_sf"/>
</dbReference>
<dbReference type="InterPro" id="IPR020855">
    <property type="entry name" value="Ureohydrolase_Mn_BS"/>
</dbReference>
<dbReference type="NCBIfam" id="TIGR01230">
    <property type="entry name" value="agmatinase"/>
    <property type="match status" value="1"/>
</dbReference>
<dbReference type="NCBIfam" id="NF002564">
    <property type="entry name" value="PRK02190.1"/>
    <property type="match status" value="1"/>
</dbReference>
<dbReference type="PANTHER" id="PTHR11358">
    <property type="entry name" value="ARGINASE/AGMATINASE"/>
    <property type="match status" value="1"/>
</dbReference>
<dbReference type="PANTHER" id="PTHR11358:SF26">
    <property type="entry name" value="GUANIDINO ACID HYDROLASE, MITOCHONDRIAL"/>
    <property type="match status" value="1"/>
</dbReference>
<dbReference type="Pfam" id="PF00491">
    <property type="entry name" value="Arginase"/>
    <property type="match status" value="1"/>
</dbReference>
<dbReference type="PIRSF" id="PIRSF036979">
    <property type="entry name" value="Arginase"/>
    <property type="match status" value="1"/>
</dbReference>
<dbReference type="SUPFAM" id="SSF52768">
    <property type="entry name" value="Arginase/deacetylase"/>
    <property type="match status" value="1"/>
</dbReference>
<dbReference type="PROSITE" id="PS01053">
    <property type="entry name" value="ARGINASE_1"/>
    <property type="match status" value="1"/>
</dbReference>
<dbReference type="PROSITE" id="PS51409">
    <property type="entry name" value="ARGINASE_2"/>
    <property type="match status" value="1"/>
</dbReference>
<keyword id="KW-0378">Hydrolase</keyword>
<keyword id="KW-0464">Manganese</keyword>
<keyword id="KW-0479">Metal-binding</keyword>
<keyword id="KW-0620">Polyamine biosynthesis</keyword>
<keyword id="KW-0661">Putrescine biosynthesis</keyword>
<keyword id="KW-0745">Spermidine biosynthesis</keyword>
<sequence length="306" mass="33603">MSTLGHQYDNSLVSNAFGFLRLPMNFQPYDSDADWVITGVPFDMATSGRAGGRHGPAAIRQVSTNLAWEHHRFPWNFDMRERLNVVDCGDLVYAFGDAREMSEKLQAHAEKLLSAGKRMLSFGGDHFVTLPLLRAHAKHFGKMALVHFDAHTDTYANGCEFDHGTMFYTAPKEGLIDPHHSVQIGIRTEFDKDNGFTVLDACQVNDRGVDDILAQVKQIVGDMPVYLTFDIDCLDPAFAPGTGTPVIGGLTSDRAIKLVRGLKDLNIVGMDVVEVAPAYDQSEITALAAATLALEMLYIQAAKKGE</sequence>
<accession>B5BFP3</accession>
<organism>
    <name type="scientific">Salmonella paratyphi A (strain AKU_12601)</name>
    <dbReference type="NCBI Taxonomy" id="554290"/>
    <lineage>
        <taxon>Bacteria</taxon>
        <taxon>Pseudomonadati</taxon>
        <taxon>Pseudomonadota</taxon>
        <taxon>Gammaproteobacteria</taxon>
        <taxon>Enterobacterales</taxon>
        <taxon>Enterobacteriaceae</taxon>
        <taxon>Salmonella</taxon>
    </lineage>
</organism>
<protein>
    <recommendedName>
        <fullName evidence="1">Agmatinase</fullName>
        <ecNumber evidence="1">3.5.3.11</ecNumber>
    </recommendedName>
    <alternativeName>
        <fullName evidence="1">Agmatine ureohydrolase</fullName>
        <shortName evidence="1">AUH</shortName>
    </alternativeName>
</protein>
<comment type="function">
    <text evidence="1">Catalyzes the formation of putrescine from agmatine.</text>
</comment>
<comment type="catalytic activity">
    <reaction evidence="1">
        <text>agmatine + H2O = urea + putrescine</text>
        <dbReference type="Rhea" id="RHEA:13929"/>
        <dbReference type="ChEBI" id="CHEBI:15377"/>
        <dbReference type="ChEBI" id="CHEBI:16199"/>
        <dbReference type="ChEBI" id="CHEBI:58145"/>
        <dbReference type="ChEBI" id="CHEBI:326268"/>
        <dbReference type="EC" id="3.5.3.11"/>
    </reaction>
</comment>
<comment type="cofactor">
    <cofactor evidence="1">
        <name>Mn(2+)</name>
        <dbReference type="ChEBI" id="CHEBI:29035"/>
    </cofactor>
</comment>
<comment type="pathway">
    <text evidence="1">Amine and polyamine biosynthesis; putrescine biosynthesis via agmatine pathway; putrescine from agmatine: step 1/1.</text>
</comment>
<comment type="similarity">
    <text evidence="1">Belongs to the arginase family. Agmatinase subfamily.</text>
</comment>
<proteinExistence type="inferred from homology"/>